<accession>Q800R3</accession>
<comment type="function">
    <text evidence="2">Antimicrobial peptide with activity against only a few strains of Gram-positive bacteria (S.aureus and B.megaterium) (PubMed:15222751). Acts in a synergistic effect in combination with Plasticin-B1 at doses that are not active alone (PubMed:15222751).</text>
</comment>
<comment type="subcellular location">
    <subcellularLocation>
        <location evidence="6">Secreted</location>
    </subcellularLocation>
    <subcellularLocation>
        <location evidence="6">Target cell membrane</location>
    </subcellularLocation>
</comment>
<comment type="tissue specificity">
    <text evidence="6">Expressed by the skin glands.</text>
</comment>
<comment type="similarity">
    <text evidence="5">Belongs to the frog skin active peptide (FSAP) family. Phylloseptin subfamily.</text>
</comment>
<comment type="online information" name="The antimicrobial peptide database">
    <link uri="https://wangapd3.com/database/query_output.php?ID=00911"/>
</comment>
<keyword id="KW-0027">Amidation</keyword>
<keyword id="KW-0878">Amphibian defense peptide</keyword>
<keyword id="KW-0044">Antibiotic</keyword>
<keyword id="KW-0929">Antimicrobial</keyword>
<keyword id="KW-0165">Cleavage on pair of basic residues</keyword>
<keyword id="KW-0391">Immunity</keyword>
<keyword id="KW-0399">Innate immunity</keyword>
<keyword id="KW-0472">Membrane</keyword>
<keyword id="KW-0964">Secreted</keyword>
<keyword id="KW-0732">Signal</keyword>
<keyword id="KW-1052">Target cell membrane</keyword>
<keyword id="KW-1053">Target membrane</keyword>
<protein>
    <recommendedName>
        <fullName evidence="4">Phylloseptin-B1</fullName>
        <shortName evidence="4">PLS-B1</shortName>
    </recommendedName>
    <alternativeName>
        <fullName evidence="3">Dermaseptin PBN1</fullName>
        <shortName evidence="3">DRP-PBN1</shortName>
    </alternativeName>
</protein>
<dbReference type="EMBL" id="AY218784">
    <property type="protein sequence ID" value="AAO62959.1"/>
    <property type="molecule type" value="mRNA"/>
</dbReference>
<dbReference type="TCDB" id="1.C.52.1.10">
    <property type="family name" value="the dermaseptin (dermaseptin) family"/>
</dbReference>
<dbReference type="GO" id="GO:0005576">
    <property type="term" value="C:extracellular region"/>
    <property type="evidence" value="ECO:0007669"/>
    <property type="project" value="UniProtKB-SubCell"/>
</dbReference>
<dbReference type="GO" id="GO:0016020">
    <property type="term" value="C:membrane"/>
    <property type="evidence" value="ECO:0007669"/>
    <property type="project" value="UniProtKB-KW"/>
</dbReference>
<dbReference type="GO" id="GO:0044218">
    <property type="term" value="C:other organism cell membrane"/>
    <property type="evidence" value="ECO:0007669"/>
    <property type="project" value="UniProtKB-KW"/>
</dbReference>
<dbReference type="GO" id="GO:0042742">
    <property type="term" value="P:defense response to bacterium"/>
    <property type="evidence" value="ECO:0007669"/>
    <property type="project" value="UniProtKB-KW"/>
</dbReference>
<dbReference type="GO" id="GO:0045087">
    <property type="term" value="P:innate immune response"/>
    <property type="evidence" value="ECO:0007669"/>
    <property type="project" value="UniProtKB-KW"/>
</dbReference>
<dbReference type="InterPro" id="IPR004275">
    <property type="entry name" value="Frog_antimicrobial_propeptide"/>
</dbReference>
<dbReference type="InterPro" id="IPR016322">
    <property type="entry name" value="FSAP"/>
</dbReference>
<dbReference type="Pfam" id="PF03032">
    <property type="entry name" value="FSAP_sig_propep"/>
    <property type="match status" value="1"/>
</dbReference>
<dbReference type="PIRSF" id="PIRSF001822">
    <property type="entry name" value="Dermaseptin_precursor"/>
    <property type="match status" value="1"/>
</dbReference>
<evidence type="ECO:0000255" key="1"/>
<evidence type="ECO:0000269" key="2">
    <source>
    </source>
</evidence>
<evidence type="ECO:0000303" key="3">
    <source>
    </source>
</evidence>
<evidence type="ECO:0000303" key="4">
    <source>
    </source>
</evidence>
<evidence type="ECO:0000305" key="5"/>
<evidence type="ECO:0000305" key="6">
    <source>
    </source>
</evidence>
<proteinExistence type="evidence at protein level"/>
<organism>
    <name type="scientific">Phyllomedusa bicolor</name>
    <name type="common">Two-colored leaf frog</name>
    <name type="synonym">Rana bicolor</name>
    <dbReference type="NCBI Taxonomy" id="8393"/>
    <lineage>
        <taxon>Eukaryota</taxon>
        <taxon>Metazoa</taxon>
        <taxon>Chordata</taxon>
        <taxon>Craniata</taxon>
        <taxon>Vertebrata</taxon>
        <taxon>Euteleostomi</taxon>
        <taxon>Amphibia</taxon>
        <taxon>Batrachia</taxon>
        <taxon>Anura</taxon>
        <taxon>Neobatrachia</taxon>
        <taxon>Hyloidea</taxon>
        <taxon>Hylidae</taxon>
        <taxon>Phyllomedusinae</taxon>
        <taxon>Phyllomedusa</taxon>
    </lineage>
</organism>
<sequence>MAFLKKSLFLVLFLGLVSLSICEEEKRETEEKEYDQGEDDKSEEKRFLSLIPHIVSGVAALAKHLG</sequence>
<feature type="signal peptide" evidence="1">
    <location>
        <begin position="1"/>
        <end position="22"/>
    </location>
</feature>
<feature type="propeptide" id="PRO_0000449897" evidence="6">
    <location>
        <begin position="23"/>
        <end position="46"/>
    </location>
</feature>
<feature type="peptide" id="PRO_5004298810" description="Phylloseptin-B1" evidence="6">
    <location>
        <begin position="47"/>
        <end position="65"/>
    </location>
</feature>
<feature type="modified residue" description="Leucine amide" evidence="6">
    <location>
        <position position="65"/>
    </location>
</feature>
<name>PLS1_PHYBI</name>
<reference key="1">
    <citation type="journal article" date="2003" name="Eur. J. Biochem.">
        <title>Antimicrobial peptides from hylid and ranin frogs originated from a 150-million-year-old ancestral precursor with a conserved signal peptide but a hypermutable antimicrobial domain.</title>
        <authorList>
            <person name="Vanhoye D."/>
            <person name="Bruston F."/>
            <person name="Nicolas P."/>
            <person name="Amiche M."/>
        </authorList>
    </citation>
    <scope>NUCLEOTIDE SEQUENCE [MRNA]</scope>
    <source>
        <tissue>Skin</tissue>
    </source>
</reference>
<reference key="2">
    <citation type="journal article" date="2004" name="Biochemistry">
        <title>Membrane association, electrostatic sequestration, and cytotoxicity of Gly-Leu-rich peptide orthologs with differing functions.</title>
        <authorList>
            <person name="Vanhoye D."/>
            <person name="Bruston F."/>
            <person name="El Amri S."/>
            <person name="Ladram A."/>
            <person name="Amiche M."/>
            <person name="Nicolas P."/>
        </authorList>
    </citation>
    <scope>NUCLEOTIDE SEQUENCE [MRNA]</scope>
    <scope>FUNCTION</scope>
    <scope>AMIDATION AT LEU-65</scope>
    <scope>SYNTHESIS OF 47-66</scope>
    <source>
        <tissue>Skin</tissue>
    </source>
</reference>
<reference key="3">
    <citation type="journal article" date="2008" name="Peptides">
        <title>A consistent nomenclature of antimicrobial peptides isolated from frogs of the subfamily Phyllomedusinae.</title>
        <authorList>
            <person name="Amiche M."/>
            <person name="Ladram A."/>
            <person name="Nicolas P."/>
        </authorList>
    </citation>
    <scope>NOMENCLATURE</scope>
</reference>